<sequence length="60" mass="6542">MADLKITLIKSAVHRLPKQRAIVKSLGLGRVSSSVVKPNNEATRGAIFHIAHLVNVEEVK</sequence>
<comment type="subunit">
    <text evidence="1">Part of the 50S ribosomal subunit.</text>
</comment>
<comment type="similarity">
    <text evidence="1">Belongs to the universal ribosomal protein uL30 family.</text>
</comment>
<keyword id="KW-1185">Reference proteome</keyword>
<keyword id="KW-0687">Ribonucleoprotein</keyword>
<keyword id="KW-0689">Ribosomal protein</keyword>
<protein>
    <recommendedName>
        <fullName evidence="1">Large ribosomal subunit protein uL30</fullName>
    </recommendedName>
    <alternativeName>
        <fullName evidence="2">50S ribosomal protein L30</fullName>
    </alternativeName>
</protein>
<organism>
    <name type="scientific">Leuconostoc mesenteroides subsp. mesenteroides (strain ATCC 8293 / DSM 20343 / BCRC 11652 / CCM 1803 / JCM 6124 / NCDO 523 / NBRC 100496 / NCIMB 8023 / NCTC 12954 / NRRL B-1118 / 37Y)</name>
    <dbReference type="NCBI Taxonomy" id="203120"/>
    <lineage>
        <taxon>Bacteria</taxon>
        <taxon>Bacillati</taxon>
        <taxon>Bacillota</taxon>
        <taxon>Bacilli</taxon>
        <taxon>Lactobacillales</taxon>
        <taxon>Lactobacillaceae</taxon>
        <taxon>Leuconostoc</taxon>
    </lineage>
</organism>
<reference key="1">
    <citation type="journal article" date="2006" name="Proc. Natl. Acad. Sci. U.S.A.">
        <title>Comparative genomics of the lactic acid bacteria.</title>
        <authorList>
            <person name="Makarova K.S."/>
            <person name="Slesarev A."/>
            <person name="Wolf Y.I."/>
            <person name="Sorokin A."/>
            <person name="Mirkin B."/>
            <person name="Koonin E.V."/>
            <person name="Pavlov A."/>
            <person name="Pavlova N."/>
            <person name="Karamychev V."/>
            <person name="Polouchine N."/>
            <person name="Shakhova V."/>
            <person name="Grigoriev I."/>
            <person name="Lou Y."/>
            <person name="Rohksar D."/>
            <person name="Lucas S."/>
            <person name="Huang K."/>
            <person name="Goodstein D.M."/>
            <person name="Hawkins T."/>
            <person name="Plengvidhya V."/>
            <person name="Welker D."/>
            <person name="Hughes J."/>
            <person name="Goh Y."/>
            <person name="Benson A."/>
            <person name="Baldwin K."/>
            <person name="Lee J.-H."/>
            <person name="Diaz-Muniz I."/>
            <person name="Dosti B."/>
            <person name="Smeianov V."/>
            <person name="Wechter W."/>
            <person name="Barabote R."/>
            <person name="Lorca G."/>
            <person name="Altermann E."/>
            <person name="Barrangou R."/>
            <person name="Ganesan B."/>
            <person name="Xie Y."/>
            <person name="Rawsthorne H."/>
            <person name="Tamir D."/>
            <person name="Parker C."/>
            <person name="Breidt F."/>
            <person name="Broadbent J.R."/>
            <person name="Hutkins R."/>
            <person name="O'Sullivan D."/>
            <person name="Steele J."/>
            <person name="Unlu G."/>
            <person name="Saier M.H. Jr."/>
            <person name="Klaenhammer T."/>
            <person name="Richardson P."/>
            <person name="Kozyavkin S."/>
            <person name="Weimer B.C."/>
            <person name="Mills D.A."/>
        </authorList>
    </citation>
    <scope>NUCLEOTIDE SEQUENCE [LARGE SCALE GENOMIC DNA]</scope>
    <source>
        <strain>ATCC 8293 / DSM 20343 / BCRC 11652 / CCM 1803 / JCM 6124 / NCDO 523 / NBRC 100496 / NCIMB 8023 / NCTC 12954 / NRRL B-1118 / 37Y</strain>
    </source>
</reference>
<name>RL30_LEUMM</name>
<dbReference type="EMBL" id="CP000414">
    <property type="protein sequence ID" value="ABJ61344.1"/>
    <property type="molecule type" value="Genomic_DNA"/>
</dbReference>
<dbReference type="RefSeq" id="WP_002816019.1">
    <property type="nucleotide sequence ID" value="NC_008531.1"/>
</dbReference>
<dbReference type="SMR" id="Q03ZM8"/>
<dbReference type="EnsemblBacteria" id="ABJ61344">
    <property type="protein sequence ID" value="ABJ61344"/>
    <property type="gene ID" value="LEUM_0213"/>
</dbReference>
<dbReference type="GeneID" id="29576991"/>
<dbReference type="KEGG" id="lme:LEUM_0213"/>
<dbReference type="eggNOG" id="COG1841">
    <property type="taxonomic scope" value="Bacteria"/>
</dbReference>
<dbReference type="HOGENOM" id="CLU_131047_2_1_9"/>
<dbReference type="Proteomes" id="UP000000362">
    <property type="component" value="Chromosome"/>
</dbReference>
<dbReference type="GO" id="GO:0015934">
    <property type="term" value="C:large ribosomal subunit"/>
    <property type="evidence" value="ECO:0007669"/>
    <property type="project" value="InterPro"/>
</dbReference>
<dbReference type="GO" id="GO:0003735">
    <property type="term" value="F:structural constituent of ribosome"/>
    <property type="evidence" value="ECO:0007669"/>
    <property type="project" value="InterPro"/>
</dbReference>
<dbReference type="GO" id="GO:0006412">
    <property type="term" value="P:translation"/>
    <property type="evidence" value="ECO:0007669"/>
    <property type="project" value="UniProtKB-UniRule"/>
</dbReference>
<dbReference type="CDD" id="cd01658">
    <property type="entry name" value="Ribosomal_L30"/>
    <property type="match status" value="1"/>
</dbReference>
<dbReference type="Gene3D" id="3.30.1390.20">
    <property type="entry name" value="Ribosomal protein L30, ferredoxin-like fold domain"/>
    <property type="match status" value="1"/>
</dbReference>
<dbReference type="HAMAP" id="MF_01371_B">
    <property type="entry name" value="Ribosomal_uL30_B"/>
    <property type="match status" value="1"/>
</dbReference>
<dbReference type="InterPro" id="IPR036919">
    <property type="entry name" value="Ribo_uL30_ferredoxin-like_sf"/>
</dbReference>
<dbReference type="InterPro" id="IPR005996">
    <property type="entry name" value="Ribosomal_uL30_bac-type"/>
</dbReference>
<dbReference type="InterPro" id="IPR016082">
    <property type="entry name" value="Ribosomal_uL30_ferredoxin-like"/>
</dbReference>
<dbReference type="NCBIfam" id="TIGR01308">
    <property type="entry name" value="rpmD_bact"/>
    <property type="match status" value="1"/>
</dbReference>
<dbReference type="Pfam" id="PF00327">
    <property type="entry name" value="Ribosomal_L30"/>
    <property type="match status" value="1"/>
</dbReference>
<dbReference type="PIRSF" id="PIRSF002211">
    <property type="entry name" value="Ribosomal_L30_bac-type"/>
    <property type="match status" value="1"/>
</dbReference>
<dbReference type="SUPFAM" id="SSF55129">
    <property type="entry name" value="Ribosomal protein L30p/L7e"/>
    <property type="match status" value="1"/>
</dbReference>
<evidence type="ECO:0000255" key="1">
    <source>
        <dbReference type="HAMAP-Rule" id="MF_01371"/>
    </source>
</evidence>
<evidence type="ECO:0000305" key="2"/>
<gene>
    <name evidence="1" type="primary">rpmD</name>
    <name type="ordered locus">LEUM_0213</name>
</gene>
<accession>Q03ZM8</accession>
<proteinExistence type="inferred from homology"/>
<feature type="chain" id="PRO_1000056062" description="Large ribosomal subunit protein uL30">
    <location>
        <begin position="1"/>
        <end position="60"/>
    </location>
</feature>